<accession>Q96MU6</accession>
<accession>Q08AG0</accession>
<gene>
    <name type="primary">ZNF778</name>
</gene>
<evidence type="ECO:0000250" key="1"/>
<evidence type="ECO:0000255" key="2">
    <source>
        <dbReference type="PROSITE-ProRule" id="PRU00042"/>
    </source>
</evidence>
<evidence type="ECO:0000255" key="3">
    <source>
        <dbReference type="PROSITE-ProRule" id="PRU00119"/>
    </source>
</evidence>
<evidence type="ECO:0000303" key="4">
    <source>
    </source>
</evidence>
<evidence type="ECO:0000305" key="5"/>
<reference key="1">
    <citation type="journal article" date="2004" name="Nat. Genet.">
        <title>Complete sequencing and characterization of 21,243 full-length human cDNAs.</title>
        <authorList>
            <person name="Ota T."/>
            <person name="Suzuki Y."/>
            <person name="Nishikawa T."/>
            <person name="Otsuki T."/>
            <person name="Sugiyama T."/>
            <person name="Irie R."/>
            <person name="Wakamatsu A."/>
            <person name="Hayashi K."/>
            <person name="Sato H."/>
            <person name="Nagai K."/>
            <person name="Kimura K."/>
            <person name="Makita H."/>
            <person name="Sekine M."/>
            <person name="Obayashi M."/>
            <person name="Nishi T."/>
            <person name="Shibahara T."/>
            <person name="Tanaka T."/>
            <person name="Ishii S."/>
            <person name="Yamamoto J."/>
            <person name="Saito K."/>
            <person name="Kawai Y."/>
            <person name="Isono Y."/>
            <person name="Nakamura Y."/>
            <person name="Nagahari K."/>
            <person name="Murakami K."/>
            <person name="Yasuda T."/>
            <person name="Iwayanagi T."/>
            <person name="Wagatsuma M."/>
            <person name="Shiratori A."/>
            <person name="Sudo H."/>
            <person name="Hosoiri T."/>
            <person name="Kaku Y."/>
            <person name="Kodaira H."/>
            <person name="Kondo H."/>
            <person name="Sugawara M."/>
            <person name="Takahashi M."/>
            <person name="Kanda K."/>
            <person name="Yokoi T."/>
            <person name="Furuya T."/>
            <person name="Kikkawa E."/>
            <person name="Omura Y."/>
            <person name="Abe K."/>
            <person name="Kamihara K."/>
            <person name="Katsuta N."/>
            <person name="Sato K."/>
            <person name="Tanikawa M."/>
            <person name="Yamazaki M."/>
            <person name="Ninomiya K."/>
            <person name="Ishibashi T."/>
            <person name="Yamashita H."/>
            <person name="Murakawa K."/>
            <person name="Fujimori K."/>
            <person name="Tanai H."/>
            <person name="Kimata M."/>
            <person name="Watanabe M."/>
            <person name="Hiraoka S."/>
            <person name="Chiba Y."/>
            <person name="Ishida S."/>
            <person name="Ono Y."/>
            <person name="Takiguchi S."/>
            <person name="Watanabe S."/>
            <person name="Yosida M."/>
            <person name="Hotuta T."/>
            <person name="Kusano J."/>
            <person name="Kanehori K."/>
            <person name="Takahashi-Fujii A."/>
            <person name="Hara H."/>
            <person name="Tanase T.-O."/>
            <person name="Nomura Y."/>
            <person name="Togiya S."/>
            <person name="Komai F."/>
            <person name="Hara R."/>
            <person name="Takeuchi K."/>
            <person name="Arita M."/>
            <person name="Imose N."/>
            <person name="Musashino K."/>
            <person name="Yuuki H."/>
            <person name="Oshima A."/>
            <person name="Sasaki N."/>
            <person name="Aotsuka S."/>
            <person name="Yoshikawa Y."/>
            <person name="Matsunawa H."/>
            <person name="Ichihara T."/>
            <person name="Shiohata N."/>
            <person name="Sano S."/>
            <person name="Moriya S."/>
            <person name="Momiyama H."/>
            <person name="Satoh N."/>
            <person name="Takami S."/>
            <person name="Terashima Y."/>
            <person name="Suzuki O."/>
            <person name="Nakagawa S."/>
            <person name="Senoh A."/>
            <person name="Mizoguchi H."/>
            <person name="Goto Y."/>
            <person name="Shimizu F."/>
            <person name="Wakebe H."/>
            <person name="Hishigaki H."/>
            <person name="Watanabe T."/>
            <person name="Sugiyama A."/>
            <person name="Takemoto M."/>
            <person name="Kawakami B."/>
            <person name="Yamazaki M."/>
            <person name="Watanabe K."/>
            <person name="Kumagai A."/>
            <person name="Itakura S."/>
            <person name="Fukuzumi Y."/>
            <person name="Fujimori Y."/>
            <person name="Komiyama M."/>
            <person name="Tashiro H."/>
            <person name="Tanigami A."/>
            <person name="Fujiwara T."/>
            <person name="Ono T."/>
            <person name="Yamada K."/>
            <person name="Fujii Y."/>
            <person name="Ozaki K."/>
            <person name="Hirao M."/>
            <person name="Ohmori Y."/>
            <person name="Kawabata A."/>
            <person name="Hikiji T."/>
            <person name="Kobatake N."/>
            <person name="Inagaki H."/>
            <person name="Ikema Y."/>
            <person name="Okamoto S."/>
            <person name="Okitani R."/>
            <person name="Kawakami T."/>
            <person name="Noguchi S."/>
            <person name="Itoh T."/>
            <person name="Shigeta K."/>
            <person name="Senba T."/>
            <person name="Matsumura K."/>
            <person name="Nakajima Y."/>
            <person name="Mizuno T."/>
            <person name="Morinaga M."/>
            <person name="Sasaki M."/>
            <person name="Togashi T."/>
            <person name="Oyama M."/>
            <person name="Hata H."/>
            <person name="Watanabe M."/>
            <person name="Komatsu T."/>
            <person name="Mizushima-Sugano J."/>
            <person name="Satoh T."/>
            <person name="Shirai Y."/>
            <person name="Takahashi Y."/>
            <person name="Nakagawa K."/>
            <person name="Okumura K."/>
            <person name="Nagase T."/>
            <person name="Nomura N."/>
            <person name="Kikuchi H."/>
            <person name="Masuho Y."/>
            <person name="Yamashita R."/>
            <person name="Nakai K."/>
            <person name="Yada T."/>
            <person name="Nakamura Y."/>
            <person name="Ohara O."/>
            <person name="Isogai T."/>
            <person name="Sugano S."/>
        </authorList>
    </citation>
    <scope>NUCLEOTIDE SEQUENCE [LARGE SCALE MRNA] (ISOFORM 1)</scope>
    <source>
        <tissue>Teratocarcinoma</tissue>
    </source>
</reference>
<reference key="2">
    <citation type="journal article" date="2004" name="Nature">
        <title>The sequence and analysis of duplication-rich human chromosome 16.</title>
        <authorList>
            <person name="Martin J."/>
            <person name="Han C."/>
            <person name="Gordon L.A."/>
            <person name="Terry A."/>
            <person name="Prabhakar S."/>
            <person name="She X."/>
            <person name="Xie G."/>
            <person name="Hellsten U."/>
            <person name="Chan Y.M."/>
            <person name="Altherr M."/>
            <person name="Couronne O."/>
            <person name="Aerts A."/>
            <person name="Bajorek E."/>
            <person name="Black S."/>
            <person name="Blumer H."/>
            <person name="Branscomb E."/>
            <person name="Brown N.C."/>
            <person name="Bruno W.J."/>
            <person name="Buckingham J.M."/>
            <person name="Callen D.F."/>
            <person name="Campbell C.S."/>
            <person name="Campbell M.L."/>
            <person name="Campbell E.W."/>
            <person name="Caoile C."/>
            <person name="Challacombe J.F."/>
            <person name="Chasteen L.A."/>
            <person name="Chertkov O."/>
            <person name="Chi H.C."/>
            <person name="Christensen M."/>
            <person name="Clark L.M."/>
            <person name="Cohn J.D."/>
            <person name="Denys M."/>
            <person name="Detter J.C."/>
            <person name="Dickson M."/>
            <person name="Dimitrijevic-Bussod M."/>
            <person name="Escobar J."/>
            <person name="Fawcett J.J."/>
            <person name="Flowers D."/>
            <person name="Fotopulos D."/>
            <person name="Glavina T."/>
            <person name="Gomez M."/>
            <person name="Gonzales E."/>
            <person name="Goodstein D."/>
            <person name="Goodwin L.A."/>
            <person name="Grady D.L."/>
            <person name="Grigoriev I."/>
            <person name="Groza M."/>
            <person name="Hammon N."/>
            <person name="Hawkins T."/>
            <person name="Haydu L."/>
            <person name="Hildebrand C.E."/>
            <person name="Huang W."/>
            <person name="Israni S."/>
            <person name="Jett J."/>
            <person name="Jewett P.B."/>
            <person name="Kadner K."/>
            <person name="Kimball H."/>
            <person name="Kobayashi A."/>
            <person name="Krawczyk M.-C."/>
            <person name="Leyba T."/>
            <person name="Longmire J.L."/>
            <person name="Lopez F."/>
            <person name="Lou Y."/>
            <person name="Lowry S."/>
            <person name="Ludeman T."/>
            <person name="Manohar C.F."/>
            <person name="Mark G.A."/>
            <person name="McMurray K.L."/>
            <person name="Meincke L.J."/>
            <person name="Morgan J."/>
            <person name="Moyzis R.K."/>
            <person name="Mundt M.O."/>
            <person name="Munk A.C."/>
            <person name="Nandkeshwar R.D."/>
            <person name="Pitluck S."/>
            <person name="Pollard M."/>
            <person name="Predki P."/>
            <person name="Parson-Quintana B."/>
            <person name="Ramirez L."/>
            <person name="Rash S."/>
            <person name="Retterer J."/>
            <person name="Ricke D.O."/>
            <person name="Robinson D.L."/>
            <person name="Rodriguez A."/>
            <person name="Salamov A."/>
            <person name="Saunders E.H."/>
            <person name="Scott D."/>
            <person name="Shough T."/>
            <person name="Stallings R.L."/>
            <person name="Stalvey M."/>
            <person name="Sutherland R.D."/>
            <person name="Tapia R."/>
            <person name="Tesmer J.G."/>
            <person name="Thayer N."/>
            <person name="Thompson L.S."/>
            <person name="Tice H."/>
            <person name="Torney D.C."/>
            <person name="Tran-Gyamfi M."/>
            <person name="Tsai M."/>
            <person name="Ulanovsky L.E."/>
            <person name="Ustaszewska A."/>
            <person name="Vo N."/>
            <person name="White P.S."/>
            <person name="Williams A.L."/>
            <person name="Wills P.L."/>
            <person name="Wu J.-R."/>
            <person name="Wu K."/>
            <person name="Yang J."/>
            <person name="DeJong P."/>
            <person name="Bruce D."/>
            <person name="Doggett N.A."/>
            <person name="Deaven L."/>
            <person name="Schmutz J."/>
            <person name="Grimwood J."/>
            <person name="Richardson P."/>
            <person name="Rokhsar D.S."/>
            <person name="Eichler E.E."/>
            <person name="Gilna P."/>
            <person name="Lucas S.M."/>
            <person name="Myers R.M."/>
            <person name="Rubin E.M."/>
            <person name="Pennacchio L.A."/>
        </authorList>
    </citation>
    <scope>NUCLEOTIDE SEQUENCE [LARGE SCALE GENOMIC DNA]</scope>
</reference>
<reference key="3">
    <citation type="journal article" date="2004" name="Genome Res.">
        <title>The status, quality, and expansion of the NIH full-length cDNA project: the Mammalian Gene Collection (MGC).</title>
        <authorList>
            <consortium name="The MGC Project Team"/>
        </authorList>
    </citation>
    <scope>NUCLEOTIDE SEQUENCE [LARGE SCALE MRNA] (ISOFORM 2)</scope>
</reference>
<organism>
    <name type="scientific">Homo sapiens</name>
    <name type="common">Human</name>
    <dbReference type="NCBI Taxonomy" id="9606"/>
    <lineage>
        <taxon>Eukaryota</taxon>
        <taxon>Metazoa</taxon>
        <taxon>Chordata</taxon>
        <taxon>Craniata</taxon>
        <taxon>Vertebrata</taxon>
        <taxon>Euteleostomi</taxon>
        <taxon>Mammalia</taxon>
        <taxon>Eutheria</taxon>
        <taxon>Euarchontoglires</taxon>
        <taxon>Primates</taxon>
        <taxon>Haplorrhini</taxon>
        <taxon>Catarrhini</taxon>
        <taxon>Hominidae</taxon>
        <taxon>Homo</taxon>
    </lineage>
</organism>
<protein>
    <recommendedName>
        <fullName>Zinc finger protein 778</fullName>
    </recommendedName>
</protein>
<sequence length="729" mass="81964">MAAPDLAHGGHVSRDSVCLHEEQTQAAGMVAGWLINCYQDAVTFDDVAVDFTQEEWTLLDPSQRDLYRDVMLENYENLASVEWRLKTKGPALRQDRSWFRASNETQTARSHNGGQLCDRTQCGEAFSEHSGLSTHVRTQNTGDSCVSNHYERDFFIPCQKTLFKIGEQFSVLGQCGKAFSSTPNVVSQQACTRDRSLDYSSCGEVFLNQSYLQARAGSHNGEETWKWKPCGKALTHSMGCATPVEMHAVRNPHVCRECGKAFRYTAYLTGRVQVHPGEKPCELEECGKASPVSSSLTQHVRIHAAEKPCECKECGKAFTGLSGLSKHVQTDPGQKPYECKDCGKACGGFYLLNEHGKTHTREKPFACVVCGKYFRNSSCLNNHVRIHTGIKPYTCSYCGKAFTVRCGLTRHVRTHTGEKPYTCKDCGKAFCTSSGLTEHVRTHTGEKPYECKDCGKSFTVSSSLTEHARIHTGEKPYECKQCGKAFTGRSGLTKHMRTHTGEKPYECKDCGKAYNRVYLLNEHVKTHTEEKPFICTVCRKSFRNSSCLNKHIQIHTGIKPYECKDCGKTFTVSSSLTEHIRTHTGEKPYECKVCGKAFTTSSHLIVHIRTHTGEKPYICKECGKAFASSSHLIEHRRTHTGEKPYICNECGKAFRASSHLHKHGRIHTGQKPYKCKECGKAYNRFYLLKEHLKTYTEEQVFVCKDCGKSFKNSSCLNHHTQIHTDEKPF</sequence>
<proteinExistence type="evidence at protein level"/>
<name>ZN778_HUMAN</name>
<keyword id="KW-0025">Alternative splicing</keyword>
<keyword id="KW-0238">DNA-binding</keyword>
<keyword id="KW-0479">Metal-binding</keyword>
<keyword id="KW-0539">Nucleus</keyword>
<keyword id="KW-1267">Proteomics identification</keyword>
<keyword id="KW-1185">Reference proteome</keyword>
<keyword id="KW-0677">Repeat</keyword>
<keyword id="KW-0804">Transcription</keyword>
<keyword id="KW-0805">Transcription regulation</keyword>
<keyword id="KW-0862">Zinc</keyword>
<keyword id="KW-0863">Zinc-finger</keyword>
<dbReference type="EMBL" id="AK056437">
    <property type="protein sequence ID" value="BAB71183.1"/>
    <property type="status" value="ALT_FRAME"/>
    <property type="molecule type" value="mRNA"/>
</dbReference>
<dbReference type="EMBL" id="AC009113">
    <property type="status" value="NOT_ANNOTATED_CDS"/>
    <property type="molecule type" value="Genomic_DNA"/>
</dbReference>
<dbReference type="EMBL" id="BC125192">
    <property type="protein sequence ID" value="AAI25193.3"/>
    <property type="molecule type" value="mRNA"/>
</dbReference>
<dbReference type="CCDS" id="CCDS45550.1">
    <molecule id="Q96MU6-1"/>
</dbReference>
<dbReference type="RefSeq" id="NP_872337.2">
    <molecule id="Q96MU6-1"/>
    <property type="nucleotide sequence ID" value="NM_182531.5"/>
</dbReference>
<dbReference type="RefSeq" id="XP_016878504.1">
    <property type="nucleotide sequence ID" value="XM_017023015.1"/>
</dbReference>
<dbReference type="SMR" id="Q96MU6"/>
<dbReference type="BioGRID" id="128247">
    <property type="interactions" value="18"/>
</dbReference>
<dbReference type="FunCoup" id="Q96MU6">
    <property type="interactions" value="21"/>
</dbReference>
<dbReference type="IntAct" id="Q96MU6">
    <property type="interactions" value="9"/>
</dbReference>
<dbReference type="MINT" id="Q96MU6"/>
<dbReference type="STRING" id="9606.ENSP00000405289"/>
<dbReference type="iPTMnet" id="Q96MU6"/>
<dbReference type="PhosphoSitePlus" id="Q96MU6"/>
<dbReference type="SwissPalm" id="Q96MU6"/>
<dbReference type="BioMuta" id="ZNF778"/>
<dbReference type="DMDM" id="317373490"/>
<dbReference type="jPOST" id="Q96MU6"/>
<dbReference type="MassIVE" id="Q96MU6"/>
<dbReference type="PaxDb" id="9606-ENSP00000405289"/>
<dbReference type="PeptideAtlas" id="Q96MU6"/>
<dbReference type="ProteomicsDB" id="77411">
    <molecule id="Q96MU6-1"/>
</dbReference>
<dbReference type="ProteomicsDB" id="77412">
    <molecule id="Q96MU6-2"/>
</dbReference>
<dbReference type="TopDownProteomics" id="Q96MU6-1">
    <molecule id="Q96MU6-1"/>
</dbReference>
<dbReference type="Antibodypedia" id="30845">
    <property type="antibodies" value="57 antibodies from 13 providers"/>
</dbReference>
<dbReference type="DNASU" id="197320"/>
<dbReference type="Ensembl" id="ENST00000306502.6">
    <molecule id="Q96MU6-2"/>
    <property type="protein sequence ID" value="ENSP00000305203.6"/>
    <property type="gene ID" value="ENSG00000170100.14"/>
</dbReference>
<dbReference type="Ensembl" id="ENST00000620195.4">
    <molecule id="Q96MU6-1"/>
    <property type="protein sequence ID" value="ENSP00000481538.1"/>
    <property type="gene ID" value="ENSG00000170100.14"/>
</dbReference>
<dbReference type="GeneID" id="197320"/>
<dbReference type="KEGG" id="hsa:197320"/>
<dbReference type="UCSC" id="uc002fmv.4">
    <molecule id="Q96MU6-1"/>
    <property type="organism name" value="human"/>
</dbReference>
<dbReference type="AGR" id="HGNC:26479"/>
<dbReference type="CTD" id="197320"/>
<dbReference type="DisGeNET" id="197320"/>
<dbReference type="GeneCards" id="ZNF778"/>
<dbReference type="HGNC" id="HGNC:26479">
    <property type="gene designation" value="ZNF778"/>
</dbReference>
<dbReference type="HPA" id="ENSG00000170100">
    <property type="expression patterns" value="Low tissue specificity"/>
</dbReference>
<dbReference type="MalaCards" id="ZNF778"/>
<dbReference type="neXtProt" id="NX_Q96MU6"/>
<dbReference type="OpenTargets" id="ENSG00000170100"/>
<dbReference type="PharmGKB" id="PA162410400"/>
<dbReference type="VEuPathDB" id="HostDB:ENSG00000170100"/>
<dbReference type="eggNOG" id="KOG1721">
    <property type="taxonomic scope" value="Eukaryota"/>
</dbReference>
<dbReference type="GeneTree" id="ENSGT00940000162638"/>
<dbReference type="HOGENOM" id="CLU_002678_44_5_1"/>
<dbReference type="InParanoid" id="Q96MU6"/>
<dbReference type="OrthoDB" id="6077919at2759"/>
<dbReference type="PAN-GO" id="Q96MU6">
    <property type="GO annotations" value="3 GO annotations based on evolutionary models"/>
</dbReference>
<dbReference type="PhylomeDB" id="Q96MU6"/>
<dbReference type="TreeFam" id="TF342172"/>
<dbReference type="PathwayCommons" id="Q96MU6"/>
<dbReference type="Reactome" id="R-HSA-212436">
    <property type="pathway name" value="Generic Transcription Pathway"/>
</dbReference>
<dbReference type="Reactome" id="R-HSA-9843940">
    <property type="pathway name" value="Regulation of endogenous retroelements by KRAB-ZFP proteins"/>
</dbReference>
<dbReference type="SignaLink" id="Q96MU6"/>
<dbReference type="BioGRID-ORCS" id="197320">
    <property type="hits" value="21 hits in 1177 CRISPR screens"/>
</dbReference>
<dbReference type="ChiTaRS" id="ZNF778">
    <property type="organism name" value="human"/>
</dbReference>
<dbReference type="GenomeRNAi" id="197320"/>
<dbReference type="Pharos" id="Q96MU6">
    <property type="development level" value="Tdark"/>
</dbReference>
<dbReference type="PRO" id="PR:Q96MU6"/>
<dbReference type="Proteomes" id="UP000005640">
    <property type="component" value="Chromosome 16"/>
</dbReference>
<dbReference type="RNAct" id="Q96MU6">
    <property type="molecule type" value="protein"/>
</dbReference>
<dbReference type="Bgee" id="ENSG00000170100">
    <property type="expression patterns" value="Expressed in sural nerve and 136 other cell types or tissues"/>
</dbReference>
<dbReference type="ExpressionAtlas" id="Q96MU6">
    <property type="expression patterns" value="baseline and differential"/>
</dbReference>
<dbReference type="GO" id="GO:0005634">
    <property type="term" value="C:nucleus"/>
    <property type="evidence" value="ECO:0000318"/>
    <property type="project" value="GO_Central"/>
</dbReference>
<dbReference type="GO" id="GO:0000981">
    <property type="term" value="F:DNA-binding transcription factor activity, RNA polymerase II-specific"/>
    <property type="evidence" value="ECO:0000318"/>
    <property type="project" value="GO_Central"/>
</dbReference>
<dbReference type="GO" id="GO:0000977">
    <property type="term" value="F:RNA polymerase II transcription regulatory region sequence-specific DNA binding"/>
    <property type="evidence" value="ECO:0000318"/>
    <property type="project" value="GO_Central"/>
</dbReference>
<dbReference type="GO" id="GO:0008270">
    <property type="term" value="F:zinc ion binding"/>
    <property type="evidence" value="ECO:0007669"/>
    <property type="project" value="UniProtKB-KW"/>
</dbReference>
<dbReference type="GO" id="GO:0006357">
    <property type="term" value="P:regulation of transcription by RNA polymerase II"/>
    <property type="evidence" value="ECO:0000318"/>
    <property type="project" value="GO_Central"/>
</dbReference>
<dbReference type="CDD" id="cd07765">
    <property type="entry name" value="KRAB_A-box"/>
    <property type="match status" value="1"/>
</dbReference>
<dbReference type="FunFam" id="3.30.160.60:FF:000352">
    <property type="entry name" value="zinc finger protein 3 homolog"/>
    <property type="match status" value="1"/>
</dbReference>
<dbReference type="FunFam" id="3.30.160.60:FF:000204">
    <property type="entry name" value="Zinc finger protein 331"/>
    <property type="match status" value="3"/>
</dbReference>
<dbReference type="FunFam" id="3.30.160.60:FF:000338">
    <property type="entry name" value="zinc finger protein 383"/>
    <property type="match status" value="1"/>
</dbReference>
<dbReference type="FunFam" id="3.30.160.60:FF:001498">
    <property type="entry name" value="Zinc finger protein 404"/>
    <property type="match status" value="1"/>
</dbReference>
<dbReference type="FunFam" id="3.30.160.60:FF:002254">
    <property type="entry name" value="Zinc finger protein 540"/>
    <property type="match status" value="3"/>
</dbReference>
<dbReference type="FunFam" id="3.30.160.60:FF:000963">
    <property type="entry name" value="zinc finger protein 546"/>
    <property type="match status" value="3"/>
</dbReference>
<dbReference type="FunFam" id="3.30.160.60:FF:000052">
    <property type="entry name" value="zinc finger protein 546 isoform X1"/>
    <property type="match status" value="2"/>
</dbReference>
<dbReference type="FunFam" id="3.30.160.60:FF:001939">
    <property type="entry name" value="Zinc finger protein 551"/>
    <property type="match status" value="1"/>
</dbReference>
<dbReference type="FunFam" id="3.30.160.60:FF:000710">
    <property type="entry name" value="Zinc finger protein 768"/>
    <property type="match status" value="1"/>
</dbReference>
<dbReference type="FunFam" id="3.30.160.60:FF:003369">
    <property type="entry name" value="Zinc finger protein 778"/>
    <property type="match status" value="1"/>
</dbReference>
<dbReference type="Gene3D" id="6.10.140.140">
    <property type="match status" value="1"/>
</dbReference>
<dbReference type="Gene3D" id="3.30.160.60">
    <property type="entry name" value="Classic Zinc Finger"/>
    <property type="match status" value="17"/>
</dbReference>
<dbReference type="InterPro" id="IPR001909">
    <property type="entry name" value="KRAB"/>
</dbReference>
<dbReference type="InterPro" id="IPR036051">
    <property type="entry name" value="KRAB_dom_sf"/>
</dbReference>
<dbReference type="InterPro" id="IPR050826">
    <property type="entry name" value="Krueppel_C2H2_ZnFinger"/>
</dbReference>
<dbReference type="InterPro" id="IPR036236">
    <property type="entry name" value="Znf_C2H2_sf"/>
</dbReference>
<dbReference type="InterPro" id="IPR013087">
    <property type="entry name" value="Znf_C2H2_type"/>
</dbReference>
<dbReference type="PANTHER" id="PTHR24377">
    <property type="entry name" value="IP01015P-RELATED"/>
    <property type="match status" value="1"/>
</dbReference>
<dbReference type="Pfam" id="PF01352">
    <property type="entry name" value="KRAB"/>
    <property type="match status" value="1"/>
</dbReference>
<dbReference type="Pfam" id="PF00096">
    <property type="entry name" value="zf-C2H2"/>
    <property type="match status" value="14"/>
</dbReference>
<dbReference type="SMART" id="SM00349">
    <property type="entry name" value="KRAB"/>
    <property type="match status" value="1"/>
</dbReference>
<dbReference type="SMART" id="SM00355">
    <property type="entry name" value="ZnF_C2H2"/>
    <property type="match status" value="18"/>
</dbReference>
<dbReference type="SUPFAM" id="SSF57667">
    <property type="entry name" value="beta-beta-alpha zinc fingers"/>
    <property type="match status" value="9"/>
</dbReference>
<dbReference type="SUPFAM" id="SSF109640">
    <property type="entry name" value="KRAB domain (Kruppel-associated box)"/>
    <property type="match status" value="1"/>
</dbReference>
<dbReference type="PROSITE" id="PS50805">
    <property type="entry name" value="KRAB"/>
    <property type="match status" value="1"/>
</dbReference>
<dbReference type="PROSITE" id="PS00028">
    <property type="entry name" value="ZINC_FINGER_C2H2_1"/>
    <property type="match status" value="13"/>
</dbReference>
<dbReference type="PROSITE" id="PS50157">
    <property type="entry name" value="ZINC_FINGER_C2H2_2"/>
    <property type="match status" value="18"/>
</dbReference>
<feature type="chain" id="PRO_0000263109" description="Zinc finger protein 778">
    <location>
        <begin position="1"/>
        <end position="729"/>
    </location>
</feature>
<feature type="domain" description="KRAB" evidence="3">
    <location>
        <begin position="42"/>
        <end position="110"/>
    </location>
</feature>
<feature type="zinc finger region" description="C2H2-type 1; degenerate" evidence="2">
    <location>
        <begin position="115"/>
        <end position="140"/>
    </location>
</feature>
<feature type="zinc finger region" description="C2H2-type 2; degenerate" evidence="2">
    <location>
        <begin position="253"/>
        <end position="275"/>
    </location>
</feature>
<feature type="zinc finger region" description="C2H2-type 3" evidence="2">
    <location>
        <begin position="279"/>
        <end position="303"/>
    </location>
</feature>
<feature type="zinc finger region" description="C2H2-type 4; degenerate" evidence="2">
    <location>
        <begin position="309"/>
        <end position="331"/>
    </location>
</feature>
<feature type="zinc finger region" description="C2H2-type 5" evidence="2">
    <location>
        <begin position="337"/>
        <end position="359"/>
    </location>
</feature>
<feature type="zinc finger region" description="C2H2-type 6" evidence="2">
    <location>
        <begin position="365"/>
        <end position="387"/>
    </location>
</feature>
<feature type="zinc finger region" description="C2H2-type 7" evidence="2">
    <location>
        <begin position="393"/>
        <end position="415"/>
    </location>
</feature>
<feature type="zinc finger region" description="C2H2-type 8" evidence="2">
    <location>
        <begin position="421"/>
        <end position="443"/>
    </location>
</feature>
<feature type="zinc finger region" description="C2H2-type 9" evidence="2">
    <location>
        <begin position="449"/>
        <end position="471"/>
    </location>
</feature>
<feature type="zinc finger region" description="C2H2-type 10" evidence="2">
    <location>
        <begin position="477"/>
        <end position="499"/>
    </location>
</feature>
<feature type="zinc finger region" description="C2H2-type 11" evidence="2">
    <location>
        <begin position="505"/>
        <end position="527"/>
    </location>
</feature>
<feature type="zinc finger region" description="C2H2-type 12" evidence="2">
    <location>
        <begin position="533"/>
        <end position="555"/>
    </location>
</feature>
<feature type="zinc finger region" description="C2H2-type 13" evidence="2">
    <location>
        <begin position="561"/>
        <end position="583"/>
    </location>
</feature>
<feature type="zinc finger region" description="C2H2-type 14" evidence="2">
    <location>
        <begin position="589"/>
        <end position="611"/>
    </location>
</feature>
<feature type="zinc finger region" description="C2H2-type 15" evidence="2">
    <location>
        <begin position="617"/>
        <end position="639"/>
    </location>
</feature>
<feature type="zinc finger region" description="C2H2-type 16" evidence="2">
    <location>
        <begin position="645"/>
        <end position="667"/>
    </location>
</feature>
<feature type="zinc finger region" description="C2H2-type 17; degenerate" evidence="2">
    <location>
        <begin position="673"/>
        <end position="695"/>
    </location>
</feature>
<feature type="zinc finger region" description="C2H2-type 18" evidence="2">
    <location>
        <begin position="701"/>
        <end position="723"/>
    </location>
</feature>
<feature type="splice variant" id="VSP_040338" description="In isoform 2." evidence="4">
    <location>
        <begin position="1"/>
        <end position="70"/>
    </location>
</feature>
<feature type="splice variant" id="VSP_040339" description="In isoform 2." evidence="4">
    <original>V</original>
    <variation>VGHHLFQPSVIYWLEQEEELRAGRRAVLQ</variation>
    <location>
        <position position="81"/>
    </location>
</feature>
<feature type="sequence variant" id="VAR_061966" description="In dbSNP:rs55974122.">
    <original>N</original>
    <variation>D</variation>
    <location>
        <position position="683"/>
    </location>
</feature>
<feature type="sequence conflict" description="In Ref. 1; BAB71183." evidence="5" ref="1">
    <original>K</original>
    <variation>T</variation>
    <location>
        <position position="164"/>
    </location>
</feature>
<feature type="sequence conflict" description="In Ref. 1; BAB71183." evidence="5" ref="1">
    <original>Y</original>
    <variation>H</variation>
    <location>
        <position position="393"/>
    </location>
</feature>
<feature type="sequence conflict" description="In Ref. 1; BAB71183." evidence="5" ref="1">
    <original>I</original>
    <variation>T</variation>
    <location>
        <position position="534"/>
    </location>
</feature>
<feature type="sequence conflict" description="In Ref. 1; BAB71183." evidence="5" ref="1">
    <original>Q</original>
    <variation>H</variation>
    <location>
        <position position="553"/>
    </location>
</feature>
<comment type="function">
    <text evidence="1">May be involved in transcriptional regulation.</text>
</comment>
<comment type="interaction">
    <interactant intactId="EBI-10291463">
        <id>Q96MU6</id>
    </interactant>
    <interactant intactId="EBI-10172290">
        <id>P60409</id>
        <label>KRTAP10-7</label>
    </interactant>
    <organismsDiffer>false</organismsDiffer>
    <experiments>3</experiments>
</comment>
<comment type="interaction">
    <interactant intactId="EBI-14242669">
        <id>Q96MU6-2</id>
    </interactant>
    <interactant intactId="EBI-12102608">
        <id>Q6BCY4-2</id>
        <label>CYB5R2</label>
    </interactant>
    <organismsDiffer>false</organismsDiffer>
    <experiments>3</experiments>
</comment>
<comment type="subcellular location">
    <subcellularLocation>
        <location evidence="5">Nucleus</location>
    </subcellularLocation>
</comment>
<comment type="alternative products">
    <event type="alternative splicing"/>
    <isoform>
        <id>Q96MU6-1</id>
        <name>1</name>
        <sequence type="displayed"/>
    </isoform>
    <isoform>
        <id>Q96MU6-2</id>
        <name>2</name>
        <sequence type="described" ref="VSP_040338 VSP_040339"/>
    </isoform>
</comment>
<comment type="similarity">
    <text evidence="5">Belongs to the krueppel C2H2-type zinc-finger protein family.</text>
</comment>
<comment type="sequence caution" evidence="5">
    <conflict type="frameshift">
        <sequence resource="EMBL-CDS" id="BAB71183"/>
    </conflict>
</comment>